<reference key="1">
    <citation type="submission" date="2007-10" db="EMBL/GenBank/DDBJ databases">
        <title>Complete genome of Alkaliphilus oremlandii OhILAs.</title>
        <authorList>
            <person name="Copeland A."/>
            <person name="Lucas S."/>
            <person name="Lapidus A."/>
            <person name="Barry K."/>
            <person name="Detter J.C."/>
            <person name="Glavina del Rio T."/>
            <person name="Hammon N."/>
            <person name="Israni S."/>
            <person name="Dalin E."/>
            <person name="Tice H."/>
            <person name="Pitluck S."/>
            <person name="Chain P."/>
            <person name="Malfatti S."/>
            <person name="Shin M."/>
            <person name="Vergez L."/>
            <person name="Schmutz J."/>
            <person name="Larimer F."/>
            <person name="Land M."/>
            <person name="Hauser L."/>
            <person name="Kyrpides N."/>
            <person name="Mikhailova N."/>
            <person name="Stolz J.F."/>
            <person name="Dawson A."/>
            <person name="Fisher E."/>
            <person name="Crable B."/>
            <person name="Perera E."/>
            <person name="Lisak J."/>
            <person name="Ranganathan M."/>
            <person name="Basu P."/>
            <person name="Richardson P."/>
        </authorList>
    </citation>
    <scope>NUCLEOTIDE SEQUENCE [LARGE SCALE GENOMIC DNA]</scope>
    <source>
        <strain>OhILAs</strain>
    </source>
</reference>
<dbReference type="EMBL" id="CP000853">
    <property type="protein sequence ID" value="ABW20400.1"/>
    <property type="molecule type" value="Genomic_DNA"/>
</dbReference>
<dbReference type="RefSeq" id="WP_012160707.1">
    <property type="nucleotide sequence ID" value="NC_009922.1"/>
</dbReference>
<dbReference type="SMR" id="A8MKR8"/>
<dbReference type="STRING" id="350688.Clos_2871"/>
<dbReference type="KEGG" id="aoe:Clos_2871"/>
<dbReference type="eggNOG" id="COG0445">
    <property type="taxonomic scope" value="Bacteria"/>
</dbReference>
<dbReference type="HOGENOM" id="CLU_007831_2_2_9"/>
<dbReference type="OrthoDB" id="9815560at2"/>
<dbReference type="Proteomes" id="UP000000269">
    <property type="component" value="Chromosome"/>
</dbReference>
<dbReference type="GO" id="GO:0005829">
    <property type="term" value="C:cytosol"/>
    <property type="evidence" value="ECO:0007669"/>
    <property type="project" value="TreeGrafter"/>
</dbReference>
<dbReference type="GO" id="GO:0050660">
    <property type="term" value="F:flavin adenine dinucleotide binding"/>
    <property type="evidence" value="ECO:0007669"/>
    <property type="project" value="UniProtKB-UniRule"/>
</dbReference>
<dbReference type="GO" id="GO:0030488">
    <property type="term" value="P:tRNA methylation"/>
    <property type="evidence" value="ECO:0007669"/>
    <property type="project" value="TreeGrafter"/>
</dbReference>
<dbReference type="GO" id="GO:0002098">
    <property type="term" value="P:tRNA wobble uridine modification"/>
    <property type="evidence" value="ECO:0007669"/>
    <property type="project" value="InterPro"/>
</dbReference>
<dbReference type="FunFam" id="1.10.10.1800:FF:000001">
    <property type="entry name" value="tRNA uridine 5-carboxymethylaminomethyl modification enzyme MnmG"/>
    <property type="match status" value="1"/>
</dbReference>
<dbReference type="FunFam" id="1.10.150.570:FF:000001">
    <property type="entry name" value="tRNA uridine 5-carboxymethylaminomethyl modification enzyme MnmG"/>
    <property type="match status" value="1"/>
</dbReference>
<dbReference type="FunFam" id="3.50.50.60:FF:000002">
    <property type="entry name" value="tRNA uridine 5-carboxymethylaminomethyl modification enzyme MnmG"/>
    <property type="match status" value="1"/>
</dbReference>
<dbReference type="Gene3D" id="3.50.50.60">
    <property type="entry name" value="FAD/NAD(P)-binding domain"/>
    <property type="match status" value="2"/>
</dbReference>
<dbReference type="Gene3D" id="1.10.150.570">
    <property type="entry name" value="GidA associated domain, C-terminal subdomain"/>
    <property type="match status" value="1"/>
</dbReference>
<dbReference type="Gene3D" id="1.10.10.1800">
    <property type="entry name" value="tRNA uridine 5-carboxymethylaminomethyl modification enzyme MnmG/GidA"/>
    <property type="match status" value="1"/>
</dbReference>
<dbReference type="HAMAP" id="MF_00129">
    <property type="entry name" value="MnmG_GidA"/>
    <property type="match status" value="1"/>
</dbReference>
<dbReference type="InterPro" id="IPR036188">
    <property type="entry name" value="FAD/NAD-bd_sf"/>
</dbReference>
<dbReference type="InterPro" id="IPR049312">
    <property type="entry name" value="GIDA_C_N"/>
</dbReference>
<dbReference type="InterPro" id="IPR004416">
    <property type="entry name" value="MnmG"/>
</dbReference>
<dbReference type="InterPro" id="IPR002218">
    <property type="entry name" value="MnmG-rel"/>
</dbReference>
<dbReference type="InterPro" id="IPR020595">
    <property type="entry name" value="MnmG-rel_CS"/>
</dbReference>
<dbReference type="InterPro" id="IPR026904">
    <property type="entry name" value="MnmG_C"/>
</dbReference>
<dbReference type="InterPro" id="IPR047001">
    <property type="entry name" value="MnmG_C_subdom"/>
</dbReference>
<dbReference type="InterPro" id="IPR044920">
    <property type="entry name" value="MnmG_C_subdom_sf"/>
</dbReference>
<dbReference type="InterPro" id="IPR040131">
    <property type="entry name" value="MnmG_N"/>
</dbReference>
<dbReference type="NCBIfam" id="TIGR00136">
    <property type="entry name" value="mnmG_gidA"/>
    <property type="match status" value="1"/>
</dbReference>
<dbReference type="PANTHER" id="PTHR11806">
    <property type="entry name" value="GLUCOSE INHIBITED DIVISION PROTEIN A"/>
    <property type="match status" value="1"/>
</dbReference>
<dbReference type="PANTHER" id="PTHR11806:SF0">
    <property type="entry name" value="PROTEIN MTO1 HOMOLOG, MITOCHONDRIAL"/>
    <property type="match status" value="1"/>
</dbReference>
<dbReference type="Pfam" id="PF01134">
    <property type="entry name" value="GIDA"/>
    <property type="match status" value="1"/>
</dbReference>
<dbReference type="Pfam" id="PF21680">
    <property type="entry name" value="GIDA_C_1st"/>
    <property type="match status" value="1"/>
</dbReference>
<dbReference type="Pfam" id="PF13932">
    <property type="entry name" value="SAM_GIDA_C"/>
    <property type="match status" value="1"/>
</dbReference>
<dbReference type="PRINTS" id="PR00411">
    <property type="entry name" value="PNDRDTASEI"/>
</dbReference>
<dbReference type="SMART" id="SM01228">
    <property type="entry name" value="GIDA_assoc_3"/>
    <property type="match status" value="1"/>
</dbReference>
<dbReference type="SUPFAM" id="SSF51905">
    <property type="entry name" value="FAD/NAD(P)-binding domain"/>
    <property type="match status" value="1"/>
</dbReference>
<dbReference type="PROSITE" id="PS01280">
    <property type="entry name" value="GIDA_1"/>
    <property type="match status" value="1"/>
</dbReference>
<dbReference type="PROSITE" id="PS01281">
    <property type="entry name" value="GIDA_2"/>
    <property type="match status" value="1"/>
</dbReference>
<name>MNMG_ALKOO</name>
<proteinExistence type="inferred from homology"/>
<feature type="chain" id="PRO_0000345238" description="tRNA uridine 5-carboxymethylaminomethyl modification enzyme MnmG">
    <location>
        <begin position="1"/>
        <end position="630"/>
    </location>
</feature>
<feature type="binding site" evidence="1">
    <location>
        <begin position="15"/>
        <end position="20"/>
    </location>
    <ligand>
        <name>FAD</name>
        <dbReference type="ChEBI" id="CHEBI:57692"/>
    </ligand>
</feature>
<feature type="binding site" evidence="1">
    <location>
        <begin position="274"/>
        <end position="288"/>
    </location>
    <ligand>
        <name>NAD(+)</name>
        <dbReference type="ChEBI" id="CHEBI:57540"/>
    </ligand>
</feature>
<keyword id="KW-0963">Cytoplasm</keyword>
<keyword id="KW-0274">FAD</keyword>
<keyword id="KW-0285">Flavoprotein</keyword>
<keyword id="KW-0520">NAD</keyword>
<keyword id="KW-1185">Reference proteome</keyword>
<keyword id="KW-0819">tRNA processing</keyword>
<evidence type="ECO:0000255" key="1">
    <source>
        <dbReference type="HAMAP-Rule" id="MF_00129"/>
    </source>
</evidence>
<gene>
    <name evidence="1" type="primary">mnmG</name>
    <name evidence="1" type="synonym">gidA</name>
    <name type="ordered locus">Clos_2871</name>
</gene>
<organism>
    <name type="scientific">Alkaliphilus oremlandii (strain OhILAs)</name>
    <name type="common">Clostridium oremlandii (strain OhILAs)</name>
    <dbReference type="NCBI Taxonomy" id="350688"/>
    <lineage>
        <taxon>Bacteria</taxon>
        <taxon>Bacillati</taxon>
        <taxon>Bacillota</taxon>
        <taxon>Clostridia</taxon>
        <taxon>Peptostreptococcales</taxon>
        <taxon>Natronincolaceae</taxon>
        <taxon>Alkaliphilus</taxon>
    </lineage>
</organism>
<sequence length="630" mass="70843">MITYNGGNYDVVVVGAGHAGCEAALATARMGYSTMMLTMSLDAIAMLPCNPSIGGTGKGHLVREIDALGGEMGLNIDKTFIQSRMLNTAKGPAVHSLRAQADKTRYHIEMKKMLENEPNLHLLQGEVVDIIVEDNTVKGVVTKTGAIYYGKAVILATGVYLKSKIFMGEVNYESGPNGLFPALYLSEKLKALGCNMRRFKTGTPARIHKDSIDFSKVSVQIEDEEIVPFSFMNEALEKEQIPCWLTRTTEETHRIIKENLGRSAMYRGDIESTGPRYCPSIEDKIVRFSEKPSHQIFIEPEGAETKEMYIQGFSTSLPEEVQVQMVRSVIGLENAIIMRPAYAIEYDCIDPTQLKASLEVKHINNLFSAGQFNGSSGYEEAAAQGLMAGINAVLKIRGEDPFILDRSEAYIGVLIDDLVTKGTNEPYRMMTSRSEYRLVLRQDNADLRLTEKGYALGLVKEDRYERYLLKKEHIKNEMERLKTTNVSPTIANPVLERAESTPIKVGMSLYDLLKRPELTYENIKEIDGTRPQDLMKDAQFQCEVMIKYEGYIEKQLRQIDQFKKLENKKLREDIDYNEIDGLRIEARQKLNAIRPLSVGQASRISGVSPADISVLLIYLEQKRRKKGEVE</sequence>
<protein>
    <recommendedName>
        <fullName evidence="1">tRNA uridine 5-carboxymethylaminomethyl modification enzyme MnmG</fullName>
    </recommendedName>
    <alternativeName>
        <fullName evidence="1">Glucose-inhibited division protein A</fullName>
    </alternativeName>
</protein>
<comment type="function">
    <text evidence="1">NAD-binding protein involved in the addition of a carboxymethylaminomethyl (cmnm) group at the wobble position (U34) of certain tRNAs, forming tRNA-cmnm(5)s(2)U34.</text>
</comment>
<comment type="cofactor">
    <cofactor evidence="1">
        <name>FAD</name>
        <dbReference type="ChEBI" id="CHEBI:57692"/>
    </cofactor>
</comment>
<comment type="subunit">
    <text evidence="1">Homodimer. Heterotetramer of two MnmE and two MnmG subunits.</text>
</comment>
<comment type="subcellular location">
    <subcellularLocation>
        <location evidence="1">Cytoplasm</location>
    </subcellularLocation>
</comment>
<comment type="similarity">
    <text evidence="1">Belongs to the MnmG family.</text>
</comment>
<accession>A8MKR8</accession>